<name>DEF_PELUB</name>
<reference key="1">
    <citation type="journal article" date="2005" name="Science">
        <title>Genome streamlining in a cosmopolitan oceanic bacterium.</title>
        <authorList>
            <person name="Giovannoni S.J."/>
            <person name="Tripp H.J."/>
            <person name="Givan S."/>
            <person name="Podar M."/>
            <person name="Vergin K.L."/>
            <person name="Baptista D."/>
            <person name="Bibbs L."/>
            <person name="Eads J."/>
            <person name="Richardson T.H."/>
            <person name="Noordewier M."/>
            <person name="Rappe M.S."/>
            <person name="Short J.M."/>
            <person name="Carrington J.C."/>
            <person name="Mathur E.J."/>
        </authorList>
    </citation>
    <scope>NUCLEOTIDE SEQUENCE [LARGE SCALE GENOMIC DNA]</scope>
    <source>
        <strain>HTCC1062</strain>
    </source>
</reference>
<evidence type="ECO:0000255" key="1">
    <source>
        <dbReference type="HAMAP-Rule" id="MF_00163"/>
    </source>
</evidence>
<sequence>MSVKSILTEPNKLLRQISKPVENVGDEERRLMDDMLDTMYAAPGIGLAAIQIGVPKRIIVMDISRDEDKKEPRYFVNPVIKNKNDITSKYEEGCLSVPDQFAEIERPNECEVEYLDYNGKKQLLKADGLLATCIQHEMDHLEGVLFIDYLSKLKKSMIIKKLSKIKSNRIIV</sequence>
<feature type="chain" id="PRO_0000301075" description="Peptide deformylase">
    <location>
        <begin position="1"/>
        <end position="172"/>
    </location>
</feature>
<feature type="active site" evidence="1">
    <location>
        <position position="137"/>
    </location>
</feature>
<feature type="binding site" evidence="1">
    <location>
        <position position="94"/>
    </location>
    <ligand>
        <name>Fe cation</name>
        <dbReference type="ChEBI" id="CHEBI:24875"/>
    </ligand>
</feature>
<feature type="binding site" evidence="1">
    <location>
        <position position="136"/>
    </location>
    <ligand>
        <name>Fe cation</name>
        <dbReference type="ChEBI" id="CHEBI:24875"/>
    </ligand>
</feature>
<feature type="binding site" evidence="1">
    <location>
        <position position="140"/>
    </location>
    <ligand>
        <name>Fe cation</name>
        <dbReference type="ChEBI" id="CHEBI:24875"/>
    </ligand>
</feature>
<gene>
    <name evidence="1" type="primary">def</name>
    <name type="ordered locus">SAR11_0456</name>
</gene>
<dbReference type="EC" id="3.5.1.88" evidence="1"/>
<dbReference type="EMBL" id="CP000084">
    <property type="protein sequence ID" value="AAZ21278.1"/>
    <property type="molecule type" value="Genomic_DNA"/>
</dbReference>
<dbReference type="RefSeq" id="WP_011281724.1">
    <property type="nucleotide sequence ID" value="NC_007205.1"/>
</dbReference>
<dbReference type="SMR" id="Q4FNG1"/>
<dbReference type="STRING" id="335992.SAR11_0456"/>
<dbReference type="GeneID" id="66294955"/>
<dbReference type="KEGG" id="pub:SAR11_0456"/>
<dbReference type="eggNOG" id="COG0242">
    <property type="taxonomic scope" value="Bacteria"/>
</dbReference>
<dbReference type="HOGENOM" id="CLU_061901_2_0_5"/>
<dbReference type="OrthoDB" id="9804313at2"/>
<dbReference type="Proteomes" id="UP000002528">
    <property type="component" value="Chromosome"/>
</dbReference>
<dbReference type="GO" id="GO:0046872">
    <property type="term" value="F:metal ion binding"/>
    <property type="evidence" value="ECO:0007669"/>
    <property type="project" value="UniProtKB-KW"/>
</dbReference>
<dbReference type="GO" id="GO:0042586">
    <property type="term" value="F:peptide deformylase activity"/>
    <property type="evidence" value="ECO:0007669"/>
    <property type="project" value="UniProtKB-UniRule"/>
</dbReference>
<dbReference type="GO" id="GO:0043686">
    <property type="term" value="P:co-translational protein modification"/>
    <property type="evidence" value="ECO:0007669"/>
    <property type="project" value="TreeGrafter"/>
</dbReference>
<dbReference type="GO" id="GO:0006412">
    <property type="term" value="P:translation"/>
    <property type="evidence" value="ECO:0007669"/>
    <property type="project" value="UniProtKB-UniRule"/>
</dbReference>
<dbReference type="CDD" id="cd00487">
    <property type="entry name" value="Pep_deformylase"/>
    <property type="match status" value="1"/>
</dbReference>
<dbReference type="FunFam" id="3.90.45.10:FF:000005">
    <property type="entry name" value="Peptide deformylase"/>
    <property type="match status" value="1"/>
</dbReference>
<dbReference type="Gene3D" id="3.90.45.10">
    <property type="entry name" value="Peptide deformylase"/>
    <property type="match status" value="1"/>
</dbReference>
<dbReference type="HAMAP" id="MF_00163">
    <property type="entry name" value="Pep_deformylase"/>
    <property type="match status" value="1"/>
</dbReference>
<dbReference type="InterPro" id="IPR023635">
    <property type="entry name" value="Peptide_deformylase"/>
</dbReference>
<dbReference type="InterPro" id="IPR036821">
    <property type="entry name" value="Peptide_deformylase_sf"/>
</dbReference>
<dbReference type="NCBIfam" id="TIGR00079">
    <property type="entry name" value="pept_deformyl"/>
    <property type="match status" value="1"/>
</dbReference>
<dbReference type="NCBIfam" id="NF001159">
    <property type="entry name" value="PRK00150.1-3"/>
    <property type="match status" value="1"/>
</dbReference>
<dbReference type="PANTHER" id="PTHR10458">
    <property type="entry name" value="PEPTIDE DEFORMYLASE"/>
    <property type="match status" value="1"/>
</dbReference>
<dbReference type="PANTHER" id="PTHR10458:SF22">
    <property type="entry name" value="PEPTIDE DEFORMYLASE"/>
    <property type="match status" value="1"/>
</dbReference>
<dbReference type="Pfam" id="PF01327">
    <property type="entry name" value="Pep_deformylase"/>
    <property type="match status" value="1"/>
</dbReference>
<dbReference type="PIRSF" id="PIRSF004749">
    <property type="entry name" value="Pep_def"/>
    <property type="match status" value="1"/>
</dbReference>
<dbReference type="PRINTS" id="PR01576">
    <property type="entry name" value="PDEFORMYLASE"/>
</dbReference>
<dbReference type="SUPFAM" id="SSF56420">
    <property type="entry name" value="Peptide deformylase"/>
    <property type="match status" value="1"/>
</dbReference>
<organism>
    <name type="scientific">Pelagibacter ubique (strain HTCC1062)</name>
    <dbReference type="NCBI Taxonomy" id="335992"/>
    <lineage>
        <taxon>Bacteria</taxon>
        <taxon>Pseudomonadati</taxon>
        <taxon>Pseudomonadota</taxon>
        <taxon>Alphaproteobacteria</taxon>
        <taxon>Candidatus Pelagibacterales</taxon>
        <taxon>Candidatus Pelagibacteraceae</taxon>
        <taxon>Candidatus Pelagibacter</taxon>
    </lineage>
</organism>
<protein>
    <recommendedName>
        <fullName evidence="1">Peptide deformylase</fullName>
        <shortName evidence="1">PDF</shortName>
        <ecNumber evidence="1">3.5.1.88</ecNumber>
    </recommendedName>
    <alternativeName>
        <fullName evidence="1">Polypeptide deformylase</fullName>
    </alternativeName>
</protein>
<comment type="function">
    <text evidence="1">Removes the formyl group from the N-terminal Met of newly synthesized proteins. Requires at least a dipeptide for an efficient rate of reaction. N-terminal L-methionine is a prerequisite for activity but the enzyme has broad specificity at other positions.</text>
</comment>
<comment type="catalytic activity">
    <reaction evidence="1">
        <text>N-terminal N-formyl-L-methionyl-[peptide] + H2O = N-terminal L-methionyl-[peptide] + formate</text>
        <dbReference type="Rhea" id="RHEA:24420"/>
        <dbReference type="Rhea" id="RHEA-COMP:10639"/>
        <dbReference type="Rhea" id="RHEA-COMP:10640"/>
        <dbReference type="ChEBI" id="CHEBI:15377"/>
        <dbReference type="ChEBI" id="CHEBI:15740"/>
        <dbReference type="ChEBI" id="CHEBI:49298"/>
        <dbReference type="ChEBI" id="CHEBI:64731"/>
        <dbReference type="EC" id="3.5.1.88"/>
    </reaction>
</comment>
<comment type="cofactor">
    <cofactor evidence="1">
        <name>Fe(2+)</name>
        <dbReference type="ChEBI" id="CHEBI:29033"/>
    </cofactor>
    <text evidence="1">Binds 1 Fe(2+) ion.</text>
</comment>
<comment type="similarity">
    <text evidence="1">Belongs to the polypeptide deformylase family.</text>
</comment>
<keyword id="KW-0378">Hydrolase</keyword>
<keyword id="KW-0408">Iron</keyword>
<keyword id="KW-0479">Metal-binding</keyword>
<keyword id="KW-0648">Protein biosynthesis</keyword>
<keyword id="KW-1185">Reference proteome</keyword>
<accession>Q4FNG1</accession>
<proteinExistence type="inferred from homology"/>